<organism>
    <name type="scientific">Danio rerio</name>
    <name type="common">Zebrafish</name>
    <name type="synonym">Brachydanio rerio</name>
    <dbReference type="NCBI Taxonomy" id="7955"/>
    <lineage>
        <taxon>Eukaryota</taxon>
        <taxon>Metazoa</taxon>
        <taxon>Chordata</taxon>
        <taxon>Craniata</taxon>
        <taxon>Vertebrata</taxon>
        <taxon>Euteleostomi</taxon>
        <taxon>Actinopterygii</taxon>
        <taxon>Neopterygii</taxon>
        <taxon>Teleostei</taxon>
        <taxon>Ostariophysi</taxon>
        <taxon>Cypriniformes</taxon>
        <taxon>Danionidae</taxon>
        <taxon>Danioninae</taxon>
        <taxon>Danio</taxon>
    </lineage>
</organism>
<name>ML26B_DANRE</name>
<dbReference type="EMBL" id="BC081499">
    <property type="protein sequence ID" value="AAH81499.1"/>
    <property type="molecule type" value="mRNA"/>
</dbReference>
<dbReference type="RefSeq" id="NP_001004669.1">
    <property type="nucleotide sequence ID" value="NM_001004669.1"/>
</dbReference>
<dbReference type="SMR" id="Q66I74"/>
<dbReference type="FunCoup" id="Q66I74">
    <property type="interactions" value="1"/>
</dbReference>
<dbReference type="PaxDb" id="7955-ENSDARP00000056618"/>
<dbReference type="DNASU" id="447931"/>
<dbReference type="GeneID" id="447931"/>
<dbReference type="KEGG" id="dre:447931"/>
<dbReference type="AGR" id="ZFIN:ZDB-GENE-040912-116"/>
<dbReference type="ZFIN" id="ZDB-GENE-040912-116">
    <property type="gene designation" value="zgc:103625"/>
</dbReference>
<dbReference type="eggNOG" id="ENOG502R3FB">
    <property type="taxonomic scope" value="Eukaryota"/>
</dbReference>
<dbReference type="InParanoid" id="Q66I74"/>
<dbReference type="OrthoDB" id="10258744at2759"/>
<dbReference type="PhylomeDB" id="Q66I74"/>
<dbReference type="PRO" id="PR:Q66I74"/>
<dbReference type="Proteomes" id="UP000000437">
    <property type="component" value="Chromosome 3"/>
</dbReference>
<dbReference type="Gene3D" id="3.40.50.150">
    <property type="entry name" value="Vaccinia Virus protein VP39"/>
    <property type="match status" value="1"/>
</dbReference>
<dbReference type="InterPro" id="IPR010342">
    <property type="entry name" value="DUF938"/>
</dbReference>
<dbReference type="InterPro" id="IPR029063">
    <property type="entry name" value="SAM-dependent_MTases_sf"/>
</dbReference>
<dbReference type="PANTHER" id="PTHR20974:SF1">
    <property type="entry name" value="METHYLTRANSFERASE-LIKE 26 B"/>
    <property type="match status" value="1"/>
</dbReference>
<dbReference type="PANTHER" id="PTHR20974">
    <property type="entry name" value="UPF0585 PROTEIN CG18661"/>
    <property type="match status" value="1"/>
</dbReference>
<dbReference type="Pfam" id="PF06080">
    <property type="entry name" value="DUF938"/>
    <property type="match status" value="1"/>
</dbReference>
<dbReference type="SUPFAM" id="SSF53335">
    <property type="entry name" value="S-adenosyl-L-methionine-dependent methyltransferases"/>
    <property type="match status" value="1"/>
</dbReference>
<gene>
    <name evidence="1" type="primary">mettl26b</name>
    <name type="ORF">zgc:103625</name>
</gene>
<feature type="chain" id="PRO_0000337118" description="Methyltransferase-like 26 B">
    <location>
        <begin position="1"/>
        <end position="205"/>
    </location>
</feature>
<proteinExistence type="evidence at transcript level"/>
<reference key="1">
    <citation type="submission" date="2004-09" db="EMBL/GenBank/DDBJ databases">
        <authorList>
            <consortium name="NIH - Zebrafish Gene Collection (ZGC) project"/>
        </authorList>
    </citation>
    <scope>NUCLEOTIDE SEQUENCE [LARGE SCALE MRNA]</scope>
    <source>
        <tissue>Larva</tissue>
    </source>
</reference>
<protein>
    <recommendedName>
        <fullName evidence="1">Methyltransferase-like 26 B</fullName>
    </recommendedName>
</protein>
<comment type="similarity">
    <text evidence="2">Belongs to the UPF0585 family.</text>
</comment>
<sequence length="205" mass="23023">MLLSPAAERSQGSLLSVIMEILKDQSHRELFGLELGSGTGQHVVHFAQEMPFVTWLPSDTKEESRNSIRAYIEATKAKTVLEPVHLDASEPWDKWAGLPQNSCDIILAINLLQYTPFSTAEGVFKGSGQILKQNGLLMTYGPYAINGTITPICNEQLDETLRQMNPEWGLPDIDVLRQLAFSNGMRMERMIEMPESNKCLVFRKL</sequence>
<accession>Q66I74</accession>
<evidence type="ECO:0000250" key="1">
    <source>
        <dbReference type="UniProtKB" id="Q96S19"/>
    </source>
</evidence>
<evidence type="ECO:0000305" key="2"/>
<keyword id="KW-1185">Reference proteome</keyword>